<sequence length="226" mass="24794">MNENLFASFATPTMMGLPIVILIVLFPSILFPSPDRLINNRLASIQQWLIQLTSKQMLSIHNRKGQTWALMLISLILFIGSTNLLGLLPHSFTPTTQLSMNLGMAIPLWAGTVITGFRHKTKASLAHFLPQGTPLPLIPMLVIIETISLFIQPMALAVRLTANITAGHLLIHLIGGATLALMDISTATAFITFTILILLTILEFAVALIQAYVFTLLVSLYLHDNT</sequence>
<dbReference type="EMBL" id="X63726">
    <property type="protein sequence ID" value="CAA45262.1"/>
    <property type="molecule type" value="Genomic_DNA"/>
</dbReference>
<dbReference type="EMBL" id="AM181032">
    <property type="protein sequence ID" value="CAJ57084.1"/>
    <property type="molecule type" value="Genomic_DNA"/>
</dbReference>
<dbReference type="PIR" id="S26156">
    <property type="entry name" value="S26156"/>
</dbReference>
<dbReference type="RefSeq" id="NP_006933.1">
    <property type="nucleotide sequence ID" value="NC_001325.1"/>
</dbReference>
<dbReference type="SMR" id="Q00521"/>
<dbReference type="GeneID" id="807653"/>
<dbReference type="CTD" id="4508"/>
<dbReference type="OrthoDB" id="24384at33554"/>
<dbReference type="GO" id="GO:0005743">
    <property type="term" value="C:mitochondrial inner membrane"/>
    <property type="evidence" value="ECO:0007669"/>
    <property type="project" value="UniProtKB-SubCell"/>
</dbReference>
<dbReference type="GO" id="GO:0045259">
    <property type="term" value="C:proton-transporting ATP synthase complex"/>
    <property type="evidence" value="ECO:0000250"/>
    <property type="project" value="UniProtKB"/>
</dbReference>
<dbReference type="GO" id="GO:0015252">
    <property type="term" value="F:proton channel activity"/>
    <property type="evidence" value="ECO:0000250"/>
    <property type="project" value="UniProtKB"/>
</dbReference>
<dbReference type="GO" id="GO:0046933">
    <property type="term" value="F:proton-transporting ATP synthase activity, rotational mechanism"/>
    <property type="evidence" value="ECO:0007669"/>
    <property type="project" value="TreeGrafter"/>
</dbReference>
<dbReference type="GO" id="GO:0015986">
    <property type="term" value="P:proton motive force-driven ATP synthesis"/>
    <property type="evidence" value="ECO:0000250"/>
    <property type="project" value="UniProtKB"/>
</dbReference>
<dbReference type="GO" id="GO:1902600">
    <property type="term" value="P:proton transmembrane transport"/>
    <property type="evidence" value="ECO:0000250"/>
    <property type="project" value="UniProtKB"/>
</dbReference>
<dbReference type="CDD" id="cd00310">
    <property type="entry name" value="ATP-synt_Fo_a_6"/>
    <property type="match status" value="1"/>
</dbReference>
<dbReference type="FunFam" id="1.20.120.220:FF:000004">
    <property type="entry name" value="ATP synthase subunit a"/>
    <property type="match status" value="1"/>
</dbReference>
<dbReference type="Gene3D" id="1.20.120.220">
    <property type="entry name" value="ATP synthase, F0 complex, subunit A"/>
    <property type="match status" value="1"/>
</dbReference>
<dbReference type="InterPro" id="IPR000568">
    <property type="entry name" value="ATP_synth_F0_asu"/>
</dbReference>
<dbReference type="InterPro" id="IPR023011">
    <property type="entry name" value="ATP_synth_F0_asu_AS"/>
</dbReference>
<dbReference type="InterPro" id="IPR045083">
    <property type="entry name" value="ATP_synth_F0_asu_bact/mt"/>
</dbReference>
<dbReference type="InterPro" id="IPR035908">
    <property type="entry name" value="F0_ATP_A_sf"/>
</dbReference>
<dbReference type="NCBIfam" id="TIGR01131">
    <property type="entry name" value="ATP_synt_6_or_A"/>
    <property type="match status" value="1"/>
</dbReference>
<dbReference type="PANTHER" id="PTHR11410">
    <property type="entry name" value="ATP SYNTHASE SUBUNIT A"/>
    <property type="match status" value="1"/>
</dbReference>
<dbReference type="PANTHER" id="PTHR11410:SF0">
    <property type="entry name" value="ATP SYNTHASE SUBUNIT A"/>
    <property type="match status" value="1"/>
</dbReference>
<dbReference type="Pfam" id="PF00119">
    <property type="entry name" value="ATP-synt_A"/>
    <property type="match status" value="1"/>
</dbReference>
<dbReference type="PRINTS" id="PR00123">
    <property type="entry name" value="ATPASEA"/>
</dbReference>
<dbReference type="SUPFAM" id="SSF81336">
    <property type="entry name" value="F1F0 ATP synthase subunit A"/>
    <property type="match status" value="1"/>
</dbReference>
<dbReference type="PROSITE" id="PS00449">
    <property type="entry name" value="ATPASE_A"/>
    <property type="match status" value="1"/>
</dbReference>
<proteinExistence type="inferred from homology"/>
<keyword id="KW-0066">ATP synthesis</keyword>
<keyword id="KW-0138">CF(0)</keyword>
<keyword id="KW-0375">Hydrogen ion transport</keyword>
<keyword id="KW-0406">Ion transport</keyword>
<keyword id="KW-0472">Membrane</keyword>
<keyword id="KW-0496">Mitochondrion</keyword>
<keyword id="KW-0999">Mitochondrion inner membrane</keyword>
<keyword id="KW-0812">Transmembrane</keyword>
<keyword id="KW-1133">Transmembrane helix</keyword>
<keyword id="KW-0813">Transport</keyword>
<accession>Q00521</accession>
<accession>Q08H14</accession>
<protein>
    <recommendedName>
        <fullName evidence="1">ATP synthase F(0) complex subunit a</fullName>
    </recommendedName>
    <alternativeName>
        <fullName>F-ATPase protein 6</fullName>
    </alternativeName>
    <alternativeName>
        <fullName evidence="1">Proton-conducting channel, ATP synthase F(0) complex subunit a</fullName>
    </alternativeName>
</protein>
<geneLocation type="mitochondrion"/>
<reference key="1">
    <citation type="journal article" date="1992" name="J. Mol. Evol.">
        <title>The complete mitochondrial DNA sequence of the harbor seal, Phoca vitulina.</title>
        <authorList>
            <person name="Arnason U."/>
            <person name="Johnsson E."/>
        </authorList>
    </citation>
    <scope>NUCLEOTIDE SEQUENCE [GENOMIC DNA]</scope>
</reference>
<reference key="2">
    <citation type="journal article" date="2006" name="Mol. Phylogenet. Evol.">
        <title>Pinniped phylogeny and a new hypothesis for their origin and dispersal.</title>
        <authorList>
            <person name="Arnason U."/>
            <person name="Gullberg A."/>
            <person name="Janke A."/>
            <person name="Kullberg M."/>
            <person name="Lehman N."/>
            <person name="Petrov E.A."/>
            <person name="Vainola R."/>
        </authorList>
    </citation>
    <scope>NUCLEOTIDE SEQUENCE [GENOMIC DNA]</scope>
</reference>
<evidence type="ECO:0000250" key="1">
    <source>
        <dbReference type="UniProtKB" id="P00846"/>
    </source>
</evidence>
<evidence type="ECO:0000255" key="2"/>
<evidence type="ECO:0000305" key="3"/>
<comment type="function">
    <text evidence="1">Subunit a, of the mitochondrial membrane ATP synthase complex (F(1)F(0) ATP synthase or Complex V) that produces ATP from ADP in the presence of a proton gradient across the membrane which is generated by electron transport complexes of the respiratory chain. ATP synthase complex consist of a soluble F(1) head domain - the catalytic core - and a membrane F(1) domain - the membrane proton channel. These two domains are linked by a central stalk rotating inside the F(1) region and a stationary peripheral stalk. During catalysis, ATP synthesis in the catalytic domain of F(1) is coupled via a rotary mechanism of the central stalk subunits to proton translocation. With the subunit c (ATP5MC1), forms the proton-conducting channel in the F(0) domain, that contains two crucial half-channels (inlet and outlet) that facilitate proton movement from the mitochondrial intermembrane space (IMS) into the matrix. Protons are taken up via the inlet half-channel and released through the outlet half-channel, following a Grotthuss mechanism.</text>
</comment>
<comment type="catalytic activity">
    <reaction evidence="1">
        <text>H(+)(in) = H(+)(out)</text>
        <dbReference type="Rhea" id="RHEA:34979"/>
        <dbReference type="ChEBI" id="CHEBI:15378"/>
    </reaction>
</comment>
<comment type="subunit">
    <text evidence="1">Component of the ATP synthase complex composed at least of ATP5F1A/subunit alpha, ATP5F1B/subunit beta, ATP5MC1/subunit c (homooctomer), MT-ATP6/subunit a, MT-ATP8/subunit 8, ATP5ME/subunit e, ATP5MF/subunit f, ATP5MG/subunit g, ATP5MK/subunit k, ATP5MJ/subunit j, ATP5F1C/subunit gamma, ATP5F1D/subunit delta, ATP5F1E/subunit epsilon, ATP5PF/subunit F6, ATP5PB/subunit b, ATP5PD/subunit d, ATP5PO/subunit OSCP. ATP synthase complex consists of a soluble F(1) head domain (subunits alpha(3) and beta(3)) - the catalytic core - and a membrane F(0) domain - the membrane proton channel (subunits c, a, 8, e, f, g, k and j). These two domains are linked by a central stalk (subunits gamma, delta, and epsilon) rotating inside the F1 region and a stationary peripheral stalk (subunits F6, b, d, and OSCP). Interacts with DNAJC30; interaction is direct.</text>
</comment>
<comment type="subcellular location">
    <subcellularLocation>
        <location>Mitochondrion inner membrane</location>
        <topology>Multi-pass membrane protein</topology>
    </subcellularLocation>
</comment>
<comment type="similarity">
    <text evidence="3">Belongs to the ATPase A chain family.</text>
</comment>
<organism>
    <name type="scientific">Phoca vitulina</name>
    <name type="common">Harbor seal</name>
    <dbReference type="NCBI Taxonomy" id="9720"/>
    <lineage>
        <taxon>Eukaryota</taxon>
        <taxon>Metazoa</taxon>
        <taxon>Chordata</taxon>
        <taxon>Craniata</taxon>
        <taxon>Vertebrata</taxon>
        <taxon>Euteleostomi</taxon>
        <taxon>Mammalia</taxon>
        <taxon>Eutheria</taxon>
        <taxon>Laurasiatheria</taxon>
        <taxon>Carnivora</taxon>
        <taxon>Caniformia</taxon>
        <taxon>Pinnipedia</taxon>
        <taxon>Phocidae</taxon>
        <taxon>Phocinae</taxon>
        <taxon>Phoca</taxon>
    </lineage>
</organism>
<name>ATP6_PHOVI</name>
<feature type="chain" id="PRO_0000082153" description="ATP synthase F(0) complex subunit a">
    <location>
        <begin position="1"/>
        <end position="226"/>
    </location>
</feature>
<feature type="transmembrane region" description="Helical" evidence="2">
    <location>
        <begin position="12"/>
        <end position="32"/>
    </location>
</feature>
<feature type="transmembrane region" description="Helical" evidence="2">
    <location>
        <begin position="68"/>
        <end position="88"/>
    </location>
</feature>
<feature type="transmembrane region" description="Helical" evidence="2">
    <location>
        <begin position="97"/>
        <end position="117"/>
    </location>
</feature>
<feature type="transmembrane region" description="Helical" evidence="2">
    <location>
        <begin position="138"/>
        <end position="158"/>
    </location>
</feature>
<feature type="transmembrane region" description="Helical" evidence="2">
    <location>
        <begin position="164"/>
        <end position="184"/>
    </location>
</feature>
<feature type="transmembrane region" description="Helical" evidence="2">
    <location>
        <begin position="189"/>
        <end position="209"/>
    </location>
</feature>
<gene>
    <name evidence="1" type="primary">MT-ATP6</name>
    <name type="synonym">ATP6</name>
    <name type="synonym">ATPASE6</name>
    <name type="synonym">MTATP6</name>
</gene>